<protein>
    <recommendedName>
        <fullName evidence="1">Probable dual-specificity RNA methyltransferase RlmN</fullName>
        <ecNumber evidence="1">2.1.1.192</ecNumber>
    </recommendedName>
    <alternativeName>
        <fullName evidence="1">23S rRNA (adenine(2503)-C(2))-methyltransferase</fullName>
    </alternativeName>
    <alternativeName>
        <fullName evidence="1">23S rRNA m2A2503 methyltransferase</fullName>
    </alternativeName>
    <alternativeName>
        <fullName evidence="1">Ribosomal RNA large subunit methyltransferase N</fullName>
    </alternativeName>
    <alternativeName>
        <fullName evidence="1">tRNA (adenine(37)-C(2))-methyltransferase</fullName>
    </alternativeName>
    <alternativeName>
        <fullName evidence="1">tRNA m2A37 methyltransferase</fullName>
    </alternativeName>
</protein>
<name>RLMN_STRGC</name>
<feature type="chain" id="PRO_0000350451" description="Probable dual-specificity RNA methyltransferase RlmN">
    <location>
        <begin position="1"/>
        <end position="362"/>
    </location>
</feature>
<feature type="domain" description="Radical SAM core" evidence="2">
    <location>
        <begin position="97"/>
        <end position="329"/>
    </location>
</feature>
<feature type="active site" description="Proton acceptor" evidence="1">
    <location>
        <position position="91"/>
    </location>
</feature>
<feature type="active site" description="S-methylcysteine intermediate" evidence="1">
    <location>
        <position position="340"/>
    </location>
</feature>
<feature type="binding site" evidence="1">
    <location>
        <position position="111"/>
    </location>
    <ligand>
        <name>[4Fe-4S] cluster</name>
        <dbReference type="ChEBI" id="CHEBI:49883"/>
        <note>4Fe-4S-S-AdoMet</note>
    </ligand>
</feature>
<feature type="binding site" evidence="1">
    <location>
        <position position="115"/>
    </location>
    <ligand>
        <name>[4Fe-4S] cluster</name>
        <dbReference type="ChEBI" id="CHEBI:49883"/>
        <note>4Fe-4S-S-AdoMet</note>
    </ligand>
</feature>
<feature type="binding site" evidence="1">
    <location>
        <position position="118"/>
    </location>
    <ligand>
        <name>[4Fe-4S] cluster</name>
        <dbReference type="ChEBI" id="CHEBI:49883"/>
        <note>4Fe-4S-S-AdoMet</note>
    </ligand>
</feature>
<feature type="binding site" evidence="1">
    <location>
        <begin position="163"/>
        <end position="164"/>
    </location>
    <ligand>
        <name>S-adenosyl-L-methionine</name>
        <dbReference type="ChEBI" id="CHEBI:59789"/>
    </ligand>
</feature>
<feature type="binding site" evidence="1">
    <location>
        <position position="195"/>
    </location>
    <ligand>
        <name>S-adenosyl-L-methionine</name>
        <dbReference type="ChEBI" id="CHEBI:59789"/>
    </ligand>
</feature>
<feature type="binding site" evidence="1">
    <location>
        <begin position="218"/>
        <end position="220"/>
    </location>
    <ligand>
        <name>S-adenosyl-L-methionine</name>
        <dbReference type="ChEBI" id="CHEBI:59789"/>
    </ligand>
</feature>
<feature type="binding site" evidence="1">
    <location>
        <position position="296"/>
    </location>
    <ligand>
        <name>S-adenosyl-L-methionine</name>
        <dbReference type="ChEBI" id="CHEBI:59789"/>
    </ligand>
</feature>
<feature type="disulfide bond" description="(transient)" evidence="1">
    <location>
        <begin position="104"/>
        <end position="340"/>
    </location>
</feature>
<keyword id="KW-0004">4Fe-4S</keyword>
<keyword id="KW-0963">Cytoplasm</keyword>
<keyword id="KW-1015">Disulfide bond</keyword>
<keyword id="KW-0408">Iron</keyword>
<keyword id="KW-0411">Iron-sulfur</keyword>
<keyword id="KW-0479">Metal-binding</keyword>
<keyword id="KW-0489">Methyltransferase</keyword>
<keyword id="KW-1185">Reference proteome</keyword>
<keyword id="KW-0698">rRNA processing</keyword>
<keyword id="KW-0949">S-adenosyl-L-methionine</keyword>
<keyword id="KW-0808">Transferase</keyword>
<keyword id="KW-0819">tRNA processing</keyword>
<proteinExistence type="inferred from homology"/>
<reference key="1">
    <citation type="journal article" date="2007" name="J. Bacteriol.">
        <title>Genome-wide transcriptional changes in Streptococcus gordonii in response to competence signaling peptide.</title>
        <authorList>
            <person name="Vickerman M.M."/>
            <person name="Iobst S."/>
            <person name="Jesionowski A.M."/>
            <person name="Gill S.R."/>
        </authorList>
    </citation>
    <scope>NUCLEOTIDE SEQUENCE [LARGE SCALE GENOMIC DNA]</scope>
    <source>
        <strain>Challis / ATCC 35105 / BCRC 15272 / CH1 / DL1 / V288</strain>
    </source>
</reference>
<organism>
    <name type="scientific">Streptococcus gordonii (strain Challis / ATCC 35105 / BCRC 15272 / CH1 / DL1 / V288)</name>
    <dbReference type="NCBI Taxonomy" id="467705"/>
    <lineage>
        <taxon>Bacteria</taxon>
        <taxon>Bacillati</taxon>
        <taxon>Bacillota</taxon>
        <taxon>Bacilli</taxon>
        <taxon>Lactobacillales</taxon>
        <taxon>Streptococcaceae</taxon>
        <taxon>Streptococcus</taxon>
    </lineage>
</organism>
<accession>A8AVZ7</accession>
<sequence length="362" mass="41509">MKPSIYSLTRQEMIEWAEAQGEKKFRAAQIWEWLYRKRVQSFEEMTNLSKDLIAKLNDQFVVNPLKQRIVQESADGTVKYLFELPDGMLIETVLMRQHYGLSVCVTTQVGCNIGCTFCASGLIKKQRDLNNGEIVSQIMLVQKYFDERGQDERVSHIVVMGIGEPFDNYDNVLKFVRTVNDDKGLAIGARHITVSTSGLAHKIRDFANEGVQVNLAVSLHAPNNDLRTSIMRINRSFPIEKLFAAIEYYIETTNRRVTFEYIMLNEVNDGVEQAKELAELLKNIRKLSYVNLIPYNPVSEHDQYSRSPKERVMAFYDTLKKNGVNCVVRQEHGTDIDAACGQLRSNTMKRDREKALVENVQP</sequence>
<dbReference type="EC" id="2.1.1.192" evidence="1"/>
<dbReference type="EMBL" id="CP000725">
    <property type="protein sequence ID" value="ABV10906.1"/>
    <property type="molecule type" value="Genomic_DNA"/>
</dbReference>
<dbReference type="RefSeq" id="WP_012000132.1">
    <property type="nucleotide sequence ID" value="NC_009785.1"/>
</dbReference>
<dbReference type="SMR" id="A8AVZ7"/>
<dbReference type="STRING" id="467705.SGO_0654"/>
<dbReference type="KEGG" id="sgo:SGO_0654"/>
<dbReference type="eggNOG" id="COG0820">
    <property type="taxonomic scope" value="Bacteria"/>
</dbReference>
<dbReference type="HOGENOM" id="CLU_029101_0_1_9"/>
<dbReference type="Proteomes" id="UP000001131">
    <property type="component" value="Chromosome"/>
</dbReference>
<dbReference type="GO" id="GO:0005737">
    <property type="term" value="C:cytoplasm"/>
    <property type="evidence" value="ECO:0007669"/>
    <property type="project" value="UniProtKB-SubCell"/>
</dbReference>
<dbReference type="GO" id="GO:0051539">
    <property type="term" value="F:4 iron, 4 sulfur cluster binding"/>
    <property type="evidence" value="ECO:0007669"/>
    <property type="project" value="UniProtKB-UniRule"/>
</dbReference>
<dbReference type="GO" id="GO:0046872">
    <property type="term" value="F:metal ion binding"/>
    <property type="evidence" value="ECO:0007669"/>
    <property type="project" value="UniProtKB-KW"/>
</dbReference>
<dbReference type="GO" id="GO:0070040">
    <property type="term" value="F:rRNA (adenine(2503)-C2-)-methyltransferase activity"/>
    <property type="evidence" value="ECO:0007669"/>
    <property type="project" value="UniProtKB-UniRule"/>
</dbReference>
<dbReference type="GO" id="GO:0019843">
    <property type="term" value="F:rRNA binding"/>
    <property type="evidence" value="ECO:0007669"/>
    <property type="project" value="UniProtKB-UniRule"/>
</dbReference>
<dbReference type="GO" id="GO:0002935">
    <property type="term" value="F:tRNA (adenine(37)-C2)-methyltransferase activity"/>
    <property type="evidence" value="ECO:0007669"/>
    <property type="project" value="UniProtKB-UniRule"/>
</dbReference>
<dbReference type="GO" id="GO:0000049">
    <property type="term" value="F:tRNA binding"/>
    <property type="evidence" value="ECO:0007669"/>
    <property type="project" value="UniProtKB-UniRule"/>
</dbReference>
<dbReference type="GO" id="GO:0070475">
    <property type="term" value="P:rRNA base methylation"/>
    <property type="evidence" value="ECO:0007669"/>
    <property type="project" value="UniProtKB-UniRule"/>
</dbReference>
<dbReference type="GO" id="GO:0030488">
    <property type="term" value="P:tRNA methylation"/>
    <property type="evidence" value="ECO:0007669"/>
    <property type="project" value="UniProtKB-UniRule"/>
</dbReference>
<dbReference type="CDD" id="cd01335">
    <property type="entry name" value="Radical_SAM"/>
    <property type="match status" value="1"/>
</dbReference>
<dbReference type="FunFam" id="3.20.20.70:FF:000014">
    <property type="entry name" value="Probable dual-specificity RNA methyltransferase RlmN"/>
    <property type="match status" value="1"/>
</dbReference>
<dbReference type="Gene3D" id="1.10.150.530">
    <property type="match status" value="1"/>
</dbReference>
<dbReference type="Gene3D" id="3.20.20.70">
    <property type="entry name" value="Aldolase class I"/>
    <property type="match status" value="1"/>
</dbReference>
<dbReference type="HAMAP" id="MF_01849">
    <property type="entry name" value="RNA_methyltr_RlmN"/>
    <property type="match status" value="1"/>
</dbReference>
<dbReference type="InterPro" id="IPR013785">
    <property type="entry name" value="Aldolase_TIM"/>
</dbReference>
<dbReference type="InterPro" id="IPR040072">
    <property type="entry name" value="Methyltransferase_A"/>
</dbReference>
<dbReference type="InterPro" id="IPR048641">
    <property type="entry name" value="RlmN_N"/>
</dbReference>
<dbReference type="InterPro" id="IPR027492">
    <property type="entry name" value="RNA_MTrfase_RlmN"/>
</dbReference>
<dbReference type="InterPro" id="IPR004383">
    <property type="entry name" value="rRNA_lsu_MTrfase_RlmN/Cfr"/>
</dbReference>
<dbReference type="InterPro" id="IPR007197">
    <property type="entry name" value="rSAM"/>
</dbReference>
<dbReference type="NCBIfam" id="TIGR00048">
    <property type="entry name" value="rRNA_mod_RlmN"/>
    <property type="match status" value="1"/>
</dbReference>
<dbReference type="PANTHER" id="PTHR30544">
    <property type="entry name" value="23S RRNA METHYLTRANSFERASE"/>
    <property type="match status" value="1"/>
</dbReference>
<dbReference type="PANTHER" id="PTHR30544:SF5">
    <property type="entry name" value="RADICAL SAM CORE DOMAIN-CONTAINING PROTEIN"/>
    <property type="match status" value="1"/>
</dbReference>
<dbReference type="Pfam" id="PF04055">
    <property type="entry name" value="Radical_SAM"/>
    <property type="match status" value="1"/>
</dbReference>
<dbReference type="Pfam" id="PF21016">
    <property type="entry name" value="RlmN_N"/>
    <property type="match status" value="1"/>
</dbReference>
<dbReference type="PIRSF" id="PIRSF006004">
    <property type="entry name" value="CHP00048"/>
    <property type="match status" value="1"/>
</dbReference>
<dbReference type="SFLD" id="SFLDF00275">
    <property type="entry name" value="adenosine_C2_methyltransferase"/>
    <property type="match status" value="1"/>
</dbReference>
<dbReference type="SFLD" id="SFLDG01062">
    <property type="entry name" value="methyltransferase_(Class_A)"/>
    <property type="match status" value="1"/>
</dbReference>
<dbReference type="SUPFAM" id="SSF102114">
    <property type="entry name" value="Radical SAM enzymes"/>
    <property type="match status" value="1"/>
</dbReference>
<dbReference type="PROSITE" id="PS51918">
    <property type="entry name" value="RADICAL_SAM"/>
    <property type="match status" value="1"/>
</dbReference>
<gene>
    <name evidence="1" type="primary">rlmN</name>
    <name type="ordered locus">SGO_0654</name>
</gene>
<comment type="function">
    <text evidence="1">Specifically methylates position 2 of adenine 2503 in 23S rRNA and position 2 of adenine 37 in tRNAs.</text>
</comment>
<comment type="catalytic activity">
    <reaction evidence="1">
        <text>adenosine(2503) in 23S rRNA + 2 reduced [2Fe-2S]-[ferredoxin] + 2 S-adenosyl-L-methionine = 2-methyladenosine(2503) in 23S rRNA + 5'-deoxyadenosine + L-methionine + 2 oxidized [2Fe-2S]-[ferredoxin] + S-adenosyl-L-homocysteine</text>
        <dbReference type="Rhea" id="RHEA:42916"/>
        <dbReference type="Rhea" id="RHEA-COMP:10000"/>
        <dbReference type="Rhea" id="RHEA-COMP:10001"/>
        <dbReference type="Rhea" id="RHEA-COMP:10152"/>
        <dbReference type="Rhea" id="RHEA-COMP:10282"/>
        <dbReference type="ChEBI" id="CHEBI:17319"/>
        <dbReference type="ChEBI" id="CHEBI:33737"/>
        <dbReference type="ChEBI" id="CHEBI:33738"/>
        <dbReference type="ChEBI" id="CHEBI:57844"/>
        <dbReference type="ChEBI" id="CHEBI:57856"/>
        <dbReference type="ChEBI" id="CHEBI:59789"/>
        <dbReference type="ChEBI" id="CHEBI:74411"/>
        <dbReference type="ChEBI" id="CHEBI:74497"/>
        <dbReference type="EC" id="2.1.1.192"/>
    </reaction>
</comment>
<comment type="catalytic activity">
    <reaction evidence="1">
        <text>adenosine(37) in tRNA + 2 reduced [2Fe-2S]-[ferredoxin] + 2 S-adenosyl-L-methionine = 2-methyladenosine(37) in tRNA + 5'-deoxyadenosine + L-methionine + 2 oxidized [2Fe-2S]-[ferredoxin] + S-adenosyl-L-homocysteine</text>
        <dbReference type="Rhea" id="RHEA:43332"/>
        <dbReference type="Rhea" id="RHEA-COMP:10000"/>
        <dbReference type="Rhea" id="RHEA-COMP:10001"/>
        <dbReference type="Rhea" id="RHEA-COMP:10162"/>
        <dbReference type="Rhea" id="RHEA-COMP:10485"/>
        <dbReference type="ChEBI" id="CHEBI:17319"/>
        <dbReference type="ChEBI" id="CHEBI:33737"/>
        <dbReference type="ChEBI" id="CHEBI:33738"/>
        <dbReference type="ChEBI" id="CHEBI:57844"/>
        <dbReference type="ChEBI" id="CHEBI:57856"/>
        <dbReference type="ChEBI" id="CHEBI:59789"/>
        <dbReference type="ChEBI" id="CHEBI:74411"/>
        <dbReference type="ChEBI" id="CHEBI:74497"/>
        <dbReference type="EC" id="2.1.1.192"/>
    </reaction>
</comment>
<comment type="cofactor">
    <cofactor evidence="1">
        <name>[4Fe-4S] cluster</name>
        <dbReference type="ChEBI" id="CHEBI:49883"/>
    </cofactor>
    <text evidence="1">Binds 1 [4Fe-4S] cluster. The cluster is coordinated with 3 cysteines and an exchangeable S-adenosyl-L-methionine.</text>
</comment>
<comment type="subcellular location">
    <subcellularLocation>
        <location evidence="1">Cytoplasm</location>
    </subcellularLocation>
</comment>
<comment type="miscellaneous">
    <text evidence="1">Reaction proceeds by a ping-pong mechanism involving intermediate methylation of a conserved cysteine residue.</text>
</comment>
<comment type="similarity">
    <text evidence="1">Belongs to the radical SAM superfamily. RlmN family.</text>
</comment>
<evidence type="ECO:0000255" key="1">
    <source>
        <dbReference type="HAMAP-Rule" id="MF_01849"/>
    </source>
</evidence>
<evidence type="ECO:0000255" key="2">
    <source>
        <dbReference type="PROSITE-ProRule" id="PRU01266"/>
    </source>
</evidence>